<feature type="chain" id="PRO_1000062816" description="Undecaprenyl-diphosphatase">
    <location>
        <begin position="1"/>
        <end position="266"/>
    </location>
</feature>
<feature type="transmembrane region" description="Helical" evidence="1">
    <location>
        <begin position="3"/>
        <end position="23"/>
    </location>
</feature>
<feature type="transmembrane region" description="Helical" evidence="1">
    <location>
        <begin position="41"/>
        <end position="61"/>
    </location>
</feature>
<feature type="transmembrane region" description="Helical" evidence="1">
    <location>
        <begin position="86"/>
        <end position="106"/>
    </location>
</feature>
<feature type="transmembrane region" description="Helical" evidence="1">
    <location>
        <begin position="108"/>
        <end position="128"/>
    </location>
</feature>
<feature type="transmembrane region" description="Helical" evidence="1">
    <location>
        <begin position="149"/>
        <end position="171"/>
    </location>
</feature>
<feature type="transmembrane region" description="Helical" evidence="1">
    <location>
        <begin position="184"/>
        <end position="204"/>
    </location>
</feature>
<feature type="transmembrane region" description="Helical" evidence="1">
    <location>
        <begin position="220"/>
        <end position="240"/>
    </location>
</feature>
<feature type="transmembrane region" description="Helical" evidence="1">
    <location>
        <begin position="245"/>
        <end position="265"/>
    </location>
</feature>
<dbReference type="EC" id="3.6.1.27" evidence="1"/>
<dbReference type="EMBL" id="CP000699">
    <property type="protein sequence ID" value="ABQ67028.1"/>
    <property type="molecule type" value="Genomic_DNA"/>
</dbReference>
<dbReference type="SMR" id="A5V412"/>
<dbReference type="STRING" id="392499.Swit_0660"/>
<dbReference type="PaxDb" id="392499-Swit_0660"/>
<dbReference type="KEGG" id="swi:Swit_0660"/>
<dbReference type="eggNOG" id="COG1968">
    <property type="taxonomic scope" value="Bacteria"/>
</dbReference>
<dbReference type="HOGENOM" id="CLU_060296_2_0_5"/>
<dbReference type="OrthoDB" id="9808289at2"/>
<dbReference type="Proteomes" id="UP000001989">
    <property type="component" value="Chromosome"/>
</dbReference>
<dbReference type="GO" id="GO:0005886">
    <property type="term" value="C:plasma membrane"/>
    <property type="evidence" value="ECO:0007669"/>
    <property type="project" value="UniProtKB-SubCell"/>
</dbReference>
<dbReference type="GO" id="GO:0050380">
    <property type="term" value="F:undecaprenyl-diphosphatase activity"/>
    <property type="evidence" value="ECO:0007669"/>
    <property type="project" value="UniProtKB-UniRule"/>
</dbReference>
<dbReference type="GO" id="GO:0071555">
    <property type="term" value="P:cell wall organization"/>
    <property type="evidence" value="ECO:0007669"/>
    <property type="project" value="UniProtKB-KW"/>
</dbReference>
<dbReference type="GO" id="GO:0009252">
    <property type="term" value="P:peptidoglycan biosynthetic process"/>
    <property type="evidence" value="ECO:0007669"/>
    <property type="project" value="UniProtKB-KW"/>
</dbReference>
<dbReference type="GO" id="GO:0008360">
    <property type="term" value="P:regulation of cell shape"/>
    <property type="evidence" value="ECO:0007669"/>
    <property type="project" value="UniProtKB-KW"/>
</dbReference>
<dbReference type="GO" id="GO:0046677">
    <property type="term" value="P:response to antibiotic"/>
    <property type="evidence" value="ECO:0007669"/>
    <property type="project" value="UniProtKB-UniRule"/>
</dbReference>
<dbReference type="HAMAP" id="MF_01006">
    <property type="entry name" value="Undec_diphosphatase"/>
    <property type="match status" value="1"/>
</dbReference>
<dbReference type="InterPro" id="IPR003824">
    <property type="entry name" value="UppP"/>
</dbReference>
<dbReference type="NCBIfam" id="NF001389">
    <property type="entry name" value="PRK00281.1-2"/>
    <property type="match status" value="1"/>
</dbReference>
<dbReference type="NCBIfam" id="NF001390">
    <property type="entry name" value="PRK00281.1-4"/>
    <property type="match status" value="1"/>
</dbReference>
<dbReference type="NCBIfam" id="TIGR00753">
    <property type="entry name" value="undec_PP_bacA"/>
    <property type="match status" value="1"/>
</dbReference>
<dbReference type="PANTHER" id="PTHR30622">
    <property type="entry name" value="UNDECAPRENYL-DIPHOSPHATASE"/>
    <property type="match status" value="1"/>
</dbReference>
<dbReference type="PANTHER" id="PTHR30622:SF3">
    <property type="entry name" value="UNDECAPRENYL-DIPHOSPHATASE"/>
    <property type="match status" value="1"/>
</dbReference>
<dbReference type="Pfam" id="PF02673">
    <property type="entry name" value="BacA"/>
    <property type="match status" value="1"/>
</dbReference>
<organism>
    <name type="scientific">Rhizorhabdus wittichii (strain DSM 6014 / CCUG 31198 / JCM 15750 / NBRC 105917 / EY 4224 / RW1)</name>
    <name type="common">Sphingomonas wittichii</name>
    <dbReference type="NCBI Taxonomy" id="392499"/>
    <lineage>
        <taxon>Bacteria</taxon>
        <taxon>Pseudomonadati</taxon>
        <taxon>Pseudomonadota</taxon>
        <taxon>Alphaproteobacteria</taxon>
        <taxon>Sphingomonadales</taxon>
        <taxon>Sphingomonadaceae</taxon>
        <taxon>Rhizorhabdus</taxon>
    </lineage>
</organism>
<name>UPPP_RHIWR</name>
<sequence>MEMSLLSIVLLGIVEGVTEFLPVSSTGHLILAGEVMKVPQGTETFDIVIQLGAILAVVVLYRERFAAVLAGLGRRDPAAIRFTRNVLVGFLPSAVIGAVAYGAIKAMLNTPIIVAVALILGGIAILVIERLVRSPTCDSVEGMSLRTSFGVGLVQCLSMIPGVSRSGATIMGALTLGVERRTAAEYSFFLAIPTMLGATTLALWKARHELGDAQATAIAIGFVVSFIVAMLVIRWFLGVVTRHGFAPFAWYRIIAGTAALIWLLAR</sequence>
<comment type="function">
    <text evidence="1">Catalyzes the dephosphorylation of undecaprenyl diphosphate (UPP). Confers resistance to bacitracin.</text>
</comment>
<comment type="catalytic activity">
    <reaction evidence="1">
        <text>di-trans,octa-cis-undecaprenyl diphosphate + H2O = di-trans,octa-cis-undecaprenyl phosphate + phosphate + H(+)</text>
        <dbReference type="Rhea" id="RHEA:28094"/>
        <dbReference type="ChEBI" id="CHEBI:15377"/>
        <dbReference type="ChEBI" id="CHEBI:15378"/>
        <dbReference type="ChEBI" id="CHEBI:43474"/>
        <dbReference type="ChEBI" id="CHEBI:58405"/>
        <dbReference type="ChEBI" id="CHEBI:60392"/>
        <dbReference type="EC" id="3.6.1.27"/>
    </reaction>
</comment>
<comment type="subcellular location">
    <subcellularLocation>
        <location evidence="1">Cell inner membrane</location>
        <topology evidence="1">Multi-pass membrane protein</topology>
    </subcellularLocation>
</comment>
<comment type="miscellaneous">
    <text>Bacitracin is thought to be involved in the inhibition of peptidoglycan synthesis by sequestering undecaprenyl diphosphate, thereby reducing the pool of lipid carrier available.</text>
</comment>
<comment type="similarity">
    <text evidence="1">Belongs to the UppP family.</text>
</comment>
<accession>A5V412</accession>
<keyword id="KW-0046">Antibiotic resistance</keyword>
<keyword id="KW-0997">Cell inner membrane</keyword>
<keyword id="KW-1003">Cell membrane</keyword>
<keyword id="KW-0133">Cell shape</keyword>
<keyword id="KW-0961">Cell wall biogenesis/degradation</keyword>
<keyword id="KW-0378">Hydrolase</keyword>
<keyword id="KW-0472">Membrane</keyword>
<keyword id="KW-0573">Peptidoglycan synthesis</keyword>
<keyword id="KW-1185">Reference proteome</keyword>
<keyword id="KW-0812">Transmembrane</keyword>
<keyword id="KW-1133">Transmembrane helix</keyword>
<proteinExistence type="inferred from homology"/>
<gene>
    <name evidence="1" type="primary">uppP</name>
    <name type="ordered locus">Swit_0660</name>
</gene>
<evidence type="ECO:0000255" key="1">
    <source>
        <dbReference type="HAMAP-Rule" id="MF_01006"/>
    </source>
</evidence>
<reference key="1">
    <citation type="journal article" date="2010" name="J. Bacteriol.">
        <title>Genome sequence of the dioxin-mineralizing bacterium Sphingomonas wittichii RW1.</title>
        <authorList>
            <person name="Miller T.R."/>
            <person name="Delcher A.L."/>
            <person name="Salzberg S.L."/>
            <person name="Saunders E."/>
            <person name="Detter J.C."/>
            <person name="Halden R.U."/>
        </authorList>
    </citation>
    <scope>NUCLEOTIDE SEQUENCE [LARGE SCALE GENOMIC DNA]</scope>
    <source>
        <strain>DSM 6014 / CCUG 31198 / JCM 15750 / NBRC 105917 / EY 4224 / RW1</strain>
    </source>
</reference>
<protein>
    <recommendedName>
        <fullName evidence="1">Undecaprenyl-diphosphatase</fullName>
        <ecNumber evidence="1">3.6.1.27</ecNumber>
    </recommendedName>
    <alternativeName>
        <fullName evidence="1">Bacitracin resistance protein</fullName>
    </alternativeName>
    <alternativeName>
        <fullName evidence="1">Undecaprenyl pyrophosphate phosphatase</fullName>
    </alternativeName>
</protein>